<gene>
    <name evidence="1" type="primary">metK</name>
    <name type="ordered locus">BPSL0212</name>
</gene>
<dbReference type="EC" id="2.5.1.6" evidence="1"/>
<dbReference type="EMBL" id="BX571965">
    <property type="protein sequence ID" value="CAH34199.1"/>
    <property type="molecule type" value="Genomic_DNA"/>
</dbReference>
<dbReference type="RefSeq" id="WP_004199069.1">
    <property type="nucleotide sequence ID" value="NZ_CP009538.1"/>
</dbReference>
<dbReference type="RefSeq" id="YP_106840.1">
    <property type="nucleotide sequence ID" value="NC_006350.1"/>
</dbReference>
<dbReference type="PDB" id="3IML">
    <property type="method" value="X-ray"/>
    <property type="resolution" value="2.35 A"/>
    <property type="chains" value="A/B/C/D=1-395"/>
</dbReference>
<dbReference type="PDBsum" id="3IML"/>
<dbReference type="SMR" id="Q63YH5"/>
<dbReference type="STRING" id="272560.BPSL0212"/>
<dbReference type="GeneID" id="93058721"/>
<dbReference type="KEGG" id="bps:BPSL0212"/>
<dbReference type="PATRIC" id="fig|272560.51.peg.1505"/>
<dbReference type="eggNOG" id="COG0192">
    <property type="taxonomic scope" value="Bacteria"/>
</dbReference>
<dbReference type="UniPathway" id="UPA00315">
    <property type="reaction ID" value="UER00080"/>
</dbReference>
<dbReference type="EvolutionaryTrace" id="Q63YH5"/>
<dbReference type="Proteomes" id="UP000000605">
    <property type="component" value="Chromosome 1"/>
</dbReference>
<dbReference type="GO" id="GO:0005737">
    <property type="term" value="C:cytoplasm"/>
    <property type="evidence" value="ECO:0007669"/>
    <property type="project" value="UniProtKB-SubCell"/>
</dbReference>
<dbReference type="GO" id="GO:0005524">
    <property type="term" value="F:ATP binding"/>
    <property type="evidence" value="ECO:0007669"/>
    <property type="project" value="UniProtKB-UniRule"/>
</dbReference>
<dbReference type="GO" id="GO:0000287">
    <property type="term" value="F:magnesium ion binding"/>
    <property type="evidence" value="ECO:0007669"/>
    <property type="project" value="UniProtKB-UniRule"/>
</dbReference>
<dbReference type="GO" id="GO:0004478">
    <property type="term" value="F:methionine adenosyltransferase activity"/>
    <property type="evidence" value="ECO:0007669"/>
    <property type="project" value="UniProtKB-UniRule"/>
</dbReference>
<dbReference type="GO" id="GO:0006730">
    <property type="term" value="P:one-carbon metabolic process"/>
    <property type="evidence" value="ECO:0007669"/>
    <property type="project" value="UniProtKB-KW"/>
</dbReference>
<dbReference type="GO" id="GO:0006556">
    <property type="term" value="P:S-adenosylmethionine biosynthetic process"/>
    <property type="evidence" value="ECO:0007669"/>
    <property type="project" value="UniProtKB-UniRule"/>
</dbReference>
<dbReference type="CDD" id="cd18079">
    <property type="entry name" value="S-AdoMet_synt"/>
    <property type="match status" value="1"/>
</dbReference>
<dbReference type="FunFam" id="3.30.300.10:FF:000003">
    <property type="entry name" value="S-adenosylmethionine synthase"/>
    <property type="match status" value="1"/>
</dbReference>
<dbReference type="FunFam" id="3.30.300.10:FF:000004">
    <property type="entry name" value="S-adenosylmethionine synthase"/>
    <property type="match status" value="1"/>
</dbReference>
<dbReference type="Gene3D" id="3.30.300.10">
    <property type="match status" value="3"/>
</dbReference>
<dbReference type="HAMAP" id="MF_00086">
    <property type="entry name" value="S_AdoMet_synth1"/>
    <property type="match status" value="1"/>
</dbReference>
<dbReference type="InterPro" id="IPR022631">
    <property type="entry name" value="ADOMET_SYNTHASE_CS"/>
</dbReference>
<dbReference type="InterPro" id="IPR022630">
    <property type="entry name" value="S-AdoMet_synt_C"/>
</dbReference>
<dbReference type="InterPro" id="IPR022629">
    <property type="entry name" value="S-AdoMet_synt_central"/>
</dbReference>
<dbReference type="InterPro" id="IPR022628">
    <property type="entry name" value="S-AdoMet_synt_N"/>
</dbReference>
<dbReference type="InterPro" id="IPR002133">
    <property type="entry name" value="S-AdoMet_synthetase"/>
</dbReference>
<dbReference type="InterPro" id="IPR022636">
    <property type="entry name" value="S-AdoMet_synthetase_sfam"/>
</dbReference>
<dbReference type="NCBIfam" id="TIGR01034">
    <property type="entry name" value="metK"/>
    <property type="match status" value="1"/>
</dbReference>
<dbReference type="PANTHER" id="PTHR11964">
    <property type="entry name" value="S-ADENOSYLMETHIONINE SYNTHETASE"/>
    <property type="match status" value="1"/>
</dbReference>
<dbReference type="Pfam" id="PF02773">
    <property type="entry name" value="S-AdoMet_synt_C"/>
    <property type="match status" value="1"/>
</dbReference>
<dbReference type="Pfam" id="PF02772">
    <property type="entry name" value="S-AdoMet_synt_M"/>
    <property type="match status" value="1"/>
</dbReference>
<dbReference type="Pfam" id="PF00438">
    <property type="entry name" value="S-AdoMet_synt_N"/>
    <property type="match status" value="1"/>
</dbReference>
<dbReference type="PIRSF" id="PIRSF000497">
    <property type="entry name" value="MAT"/>
    <property type="match status" value="1"/>
</dbReference>
<dbReference type="SUPFAM" id="SSF55973">
    <property type="entry name" value="S-adenosylmethionine synthetase"/>
    <property type="match status" value="3"/>
</dbReference>
<dbReference type="PROSITE" id="PS00376">
    <property type="entry name" value="ADOMET_SYNTHASE_1"/>
    <property type="match status" value="1"/>
</dbReference>
<dbReference type="PROSITE" id="PS00377">
    <property type="entry name" value="ADOMET_SYNTHASE_2"/>
    <property type="match status" value="1"/>
</dbReference>
<comment type="function">
    <text evidence="1">Catalyzes the formation of S-adenosylmethionine (AdoMet) from methionine and ATP. The overall synthetic reaction is composed of two sequential steps, AdoMet formation and the subsequent tripolyphosphate hydrolysis which occurs prior to release of AdoMet from the enzyme.</text>
</comment>
<comment type="catalytic activity">
    <reaction evidence="1">
        <text>L-methionine + ATP + H2O = S-adenosyl-L-methionine + phosphate + diphosphate</text>
        <dbReference type="Rhea" id="RHEA:21080"/>
        <dbReference type="ChEBI" id="CHEBI:15377"/>
        <dbReference type="ChEBI" id="CHEBI:30616"/>
        <dbReference type="ChEBI" id="CHEBI:33019"/>
        <dbReference type="ChEBI" id="CHEBI:43474"/>
        <dbReference type="ChEBI" id="CHEBI:57844"/>
        <dbReference type="ChEBI" id="CHEBI:59789"/>
        <dbReference type="EC" id="2.5.1.6"/>
    </reaction>
</comment>
<comment type="cofactor">
    <cofactor evidence="1">
        <name>Mg(2+)</name>
        <dbReference type="ChEBI" id="CHEBI:18420"/>
    </cofactor>
    <text evidence="1">Binds 2 divalent ions per subunit.</text>
</comment>
<comment type="cofactor">
    <cofactor evidence="1">
        <name>K(+)</name>
        <dbReference type="ChEBI" id="CHEBI:29103"/>
    </cofactor>
    <text evidence="1">Binds 1 potassium ion per subunit.</text>
</comment>
<comment type="pathway">
    <text evidence="1">Amino-acid biosynthesis; S-adenosyl-L-methionine biosynthesis; S-adenosyl-L-methionine from L-methionine: step 1/1.</text>
</comment>
<comment type="subunit">
    <text evidence="1">Homotetramer; dimer of dimers.</text>
</comment>
<comment type="subcellular location">
    <subcellularLocation>
        <location evidence="1">Cytoplasm</location>
    </subcellularLocation>
</comment>
<comment type="similarity">
    <text evidence="1">Belongs to the AdoMet synthase family.</text>
</comment>
<accession>Q63YH5</accession>
<reference key="1">
    <citation type="journal article" date="2004" name="Proc. Natl. Acad. Sci. U.S.A.">
        <title>Genomic plasticity of the causative agent of melioidosis, Burkholderia pseudomallei.</title>
        <authorList>
            <person name="Holden M.T.G."/>
            <person name="Titball R.W."/>
            <person name="Peacock S.J."/>
            <person name="Cerdeno-Tarraga A.-M."/>
            <person name="Atkins T."/>
            <person name="Crossman L.C."/>
            <person name="Pitt T."/>
            <person name="Churcher C."/>
            <person name="Mungall K.L."/>
            <person name="Bentley S.D."/>
            <person name="Sebaihia M."/>
            <person name="Thomson N.R."/>
            <person name="Bason N."/>
            <person name="Beacham I.R."/>
            <person name="Brooks K."/>
            <person name="Brown K.A."/>
            <person name="Brown N.F."/>
            <person name="Challis G.L."/>
            <person name="Cherevach I."/>
            <person name="Chillingworth T."/>
            <person name="Cronin A."/>
            <person name="Crossett B."/>
            <person name="Davis P."/>
            <person name="DeShazer D."/>
            <person name="Feltwell T."/>
            <person name="Fraser A."/>
            <person name="Hance Z."/>
            <person name="Hauser H."/>
            <person name="Holroyd S."/>
            <person name="Jagels K."/>
            <person name="Keith K.E."/>
            <person name="Maddison M."/>
            <person name="Moule S."/>
            <person name="Price C."/>
            <person name="Quail M.A."/>
            <person name="Rabbinowitsch E."/>
            <person name="Rutherford K."/>
            <person name="Sanders M."/>
            <person name="Simmonds M."/>
            <person name="Songsivilai S."/>
            <person name="Stevens K."/>
            <person name="Tumapa S."/>
            <person name="Vesaratchavest M."/>
            <person name="Whitehead S."/>
            <person name="Yeats C."/>
            <person name="Barrell B.G."/>
            <person name="Oyston P.C.F."/>
            <person name="Parkhill J."/>
        </authorList>
    </citation>
    <scope>NUCLEOTIDE SEQUENCE [LARGE SCALE GENOMIC DNA]</scope>
    <source>
        <strain>K96243</strain>
    </source>
</reference>
<reference evidence="2" key="2">
    <citation type="journal article" date="2013" name="PLoS ONE">
        <title>Combining functional and structural genomics to sample the essential Burkholderia structome.</title>
        <authorList>
            <person name="Baugh L."/>
            <person name="Gallagher L.A."/>
            <person name="Patrapuvich R."/>
            <person name="Clifton M.C."/>
            <person name="Gardberg A.S."/>
            <person name="Edwards T.E."/>
            <person name="Armour B."/>
            <person name="Begley D.W."/>
            <person name="Dieterich S.H."/>
            <person name="Dranow D.M."/>
            <person name="Abendroth J."/>
            <person name="Fairman J.W."/>
            <person name="Fox D."/>
            <person name="Staker B.L."/>
            <person name="Phan I."/>
            <person name="Gillespie A."/>
            <person name="Choi R."/>
            <person name="Nakazawa-Hewitt S."/>
            <person name="Nguyen M.T."/>
            <person name="Napuli A."/>
            <person name="Barrett L."/>
            <person name="Buchko G.W."/>
            <person name="Stacy R."/>
            <person name="Myler P.J."/>
            <person name="Stewart L.J."/>
            <person name="Manoil C."/>
            <person name="Van Voorhis W.C."/>
        </authorList>
    </citation>
    <scope>X-RAY CRYSTALLOGRAPHY (2.35 ANGSTROMS)</scope>
</reference>
<evidence type="ECO:0000255" key="1">
    <source>
        <dbReference type="HAMAP-Rule" id="MF_00086"/>
    </source>
</evidence>
<evidence type="ECO:0007744" key="2">
    <source>
        <dbReference type="PDB" id="3IML"/>
    </source>
</evidence>
<evidence type="ECO:0007829" key="3">
    <source>
        <dbReference type="PDB" id="3IML"/>
    </source>
</evidence>
<feature type="chain" id="PRO_0000174505" description="S-adenosylmethionine synthase">
    <location>
        <begin position="1"/>
        <end position="395"/>
    </location>
</feature>
<feature type="region of interest" description="Flexible loop" evidence="1">
    <location>
        <begin position="100"/>
        <end position="110"/>
    </location>
</feature>
<feature type="binding site" description="in other chain" evidence="1">
    <location>
        <position position="16"/>
    </location>
    <ligand>
        <name>ATP</name>
        <dbReference type="ChEBI" id="CHEBI:30616"/>
        <note>ligand shared between two neighboring subunits</note>
    </ligand>
</feature>
<feature type="binding site" evidence="1">
    <location>
        <position position="18"/>
    </location>
    <ligand>
        <name>Mg(2+)</name>
        <dbReference type="ChEBI" id="CHEBI:18420"/>
    </ligand>
</feature>
<feature type="binding site" evidence="1">
    <location>
        <position position="44"/>
    </location>
    <ligand>
        <name>K(+)</name>
        <dbReference type="ChEBI" id="CHEBI:29103"/>
    </ligand>
</feature>
<feature type="binding site" description="in other chain" evidence="1">
    <location>
        <position position="57"/>
    </location>
    <ligand>
        <name>L-methionine</name>
        <dbReference type="ChEBI" id="CHEBI:57844"/>
        <note>ligand shared between two neighboring subunits</note>
    </ligand>
</feature>
<feature type="binding site" description="in other chain" evidence="1">
    <location>
        <position position="100"/>
    </location>
    <ligand>
        <name>L-methionine</name>
        <dbReference type="ChEBI" id="CHEBI:57844"/>
        <note>ligand shared between two neighboring subunits</note>
    </ligand>
</feature>
<feature type="binding site" description="in other chain" evidence="1">
    <location>
        <begin position="167"/>
        <end position="169"/>
    </location>
    <ligand>
        <name>ATP</name>
        <dbReference type="ChEBI" id="CHEBI:30616"/>
        <note>ligand shared between two neighboring subunits</note>
    </ligand>
</feature>
<feature type="binding site" description="in other chain" evidence="1">
    <location>
        <begin position="233"/>
        <end position="234"/>
    </location>
    <ligand>
        <name>ATP</name>
        <dbReference type="ChEBI" id="CHEBI:30616"/>
        <note>ligand shared between two neighboring subunits</note>
    </ligand>
</feature>
<feature type="binding site" evidence="1">
    <location>
        <position position="242"/>
    </location>
    <ligand>
        <name>ATP</name>
        <dbReference type="ChEBI" id="CHEBI:30616"/>
        <note>ligand shared between two neighboring subunits</note>
    </ligand>
</feature>
<feature type="binding site" evidence="1">
    <location>
        <position position="242"/>
    </location>
    <ligand>
        <name>L-methionine</name>
        <dbReference type="ChEBI" id="CHEBI:57844"/>
        <note>ligand shared between two neighboring subunits</note>
    </ligand>
</feature>
<feature type="binding site" description="in other chain" evidence="1">
    <location>
        <begin position="248"/>
        <end position="249"/>
    </location>
    <ligand>
        <name>ATP</name>
        <dbReference type="ChEBI" id="CHEBI:30616"/>
        <note>ligand shared between two neighboring subunits</note>
    </ligand>
</feature>
<feature type="binding site" evidence="1">
    <location>
        <position position="265"/>
    </location>
    <ligand>
        <name>ATP</name>
        <dbReference type="ChEBI" id="CHEBI:30616"/>
        <note>ligand shared between two neighboring subunits</note>
    </ligand>
</feature>
<feature type="binding site" evidence="1">
    <location>
        <position position="269"/>
    </location>
    <ligand>
        <name>ATP</name>
        <dbReference type="ChEBI" id="CHEBI:30616"/>
        <note>ligand shared between two neighboring subunits</note>
    </ligand>
</feature>
<feature type="binding site" description="in other chain" evidence="1">
    <location>
        <position position="273"/>
    </location>
    <ligand>
        <name>L-methionine</name>
        <dbReference type="ChEBI" id="CHEBI:57844"/>
        <note>ligand shared between two neighboring subunits</note>
    </ligand>
</feature>
<feature type="strand" evidence="3">
    <location>
        <begin position="4"/>
        <end position="12"/>
    </location>
</feature>
<feature type="helix" evidence="3">
    <location>
        <begin position="17"/>
        <end position="35"/>
    </location>
</feature>
<feature type="strand" evidence="3">
    <location>
        <begin position="40"/>
        <end position="47"/>
    </location>
</feature>
<feature type="strand" evidence="3">
    <location>
        <begin position="49"/>
        <end position="59"/>
    </location>
</feature>
<feature type="helix" evidence="3">
    <location>
        <begin position="66"/>
        <end position="77"/>
    </location>
</feature>
<feature type="strand" evidence="3">
    <location>
        <begin position="92"/>
        <end position="100"/>
    </location>
</feature>
<feature type="strand" evidence="3">
    <location>
        <begin position="120"/>
        <end position="122"/>
    </location>
</feature>
<feature type="strand" evidence="3">
    <location>
        <begin position="124"/>
        <end position="131"/>
    </location>
</feature>
<feature type="helix" evidence="3">
    <location>
        <begin position="140"/>
        <end position="157"/>
    </location>
</feature>
<feature type="strand" evidence="3">
    <location>
        <begin position="164"/>
        <end position="177"/>
    </location>
</feature>
<feature type="strand" evidence="3">
    <location>
        <begin position="180"/>
        <end position="193"/>
    </location>
</feature>
<feature type="helix" evidence="3">
    <location>
        <begin position="199"/>
        <end position="209"/>
    </location>
</feature>
<feature type="turn" evidence="3">
    <location>
        <begin position="210"/>
        <end position="214"/>
    </location>
</feature>
<feature type="helix" evidence="3">
    <location>
        <begin position="217"/>
        <end position="219"/>
    </location>
</feature>
<feature type="strand" evidence="3">
    <location>
        <begin position="225"/>
        <end position="229"/>
    </location>
</feature>
<feature type="helix" evidence="3">
    <location>
        <begin position="238"/>
        <end position="240"/>
    </location>
</feature>
<feature type="turn" evidence="3">
    <location>
        <begin position="250"/>
        <end position="257"/>
    </location>
</feature>
<feature type="helix" evidence="3">
    <location>
        <begin position="274"/>
        <end position="291"/>
    </location>
</feature>
<feature type="strand" evidence="3">
    <location>
        <begin position="296"/>
        <end position="304"/>
    </location>
</feature>
<feature type="strand" evidence="3">
    <location>
        <begin position="312"/>
        <end position="317"/>
    </location>
</feature>
<feature type="helix" evidence="3">
    <location>
        <begin position="326"/>
        <end position="336"/>
    </location>
</feature>
<feature type="helix" evidence="3">
    <location>
        <begin position="341"/>
        <end position="348"/>
    </location>
</feature>
<feature type="helix" evidence="3">
    <location>
        <begin position="356"/>
        <end position="359"/>
    </location>
</feature>
<feature type="strand" evidence="3">
    <location>
        <begin position="363"/>
        <end position="365"/>
    </location>
</feature>
<feature type="helix" evidence="3">
    <location>
        <begin position="372"/>
        <end position="374"/>
    </location>
</feature>
<feature type="helix" evidence="3">
    <location>
        <begin position="379"/>
        <end position="386"/>
    </location>
</feature>
<name>METK_BURPS</name>
<proteinExistence type="evidence at protein level"/>
<keyword id="KW-0002">3D-structure</keyword>
<keyword id="KW-0067">ATP-binding</keyword>
<keyword id="KW-0963">Cytoplasm</keyword>
<keyword id="KW-0460">Magnesium</keyword>
<keyword id="KW-0479">Metal-binding</keyword>
<keyword id="KW-0547">Nucleotide-binding</keyword>
<keyword id="KW-0554">One-carbon metabolism</keyword>
<keyword id="KW-0630">Potassium</keyword>
<keyword id="KW-1185">Reference proteome</keyword>
<keyword id="KW-0808">Transferase</keyword>
<organism>
    <name type="scientific">Burkholderia pseudomallei (strain K96243)</name>
    <dbReference type="NCBI Taxonomy" id="272560"/>
    <lineage>
        <taxon>Bacteria</taxon>
        <taxon>Pseudomonadati</taxon>
        <taxon>Pseudomonadota</taxon>
        <taxon>Betaproteobacteria</taxon>
        <taxon>Burkholderiales</taxon>
        <taxon>Burkholderiaceae</taxon>
        <taxon>Burkholderia</taxon>
        <taxon>pseudomallei group</taxon>
    </lineage>
</organism>
<protein>
    <recommendedName>
        <fullName evidence="1">S-adenosylmethionine synthase</fullName>
        <shortName evidence="1">AdoMet synthase</shortName>
        <ecNumber evidence="1">2.5.1.6</ecNumber>
    </recommendedName>
    <alternativeName>
        <fullName evidence="1">MAT</fullName>
    </alternativeName>
    <alternativeName>
        <fullName evidence="1">Methionine adenosyltransferase</fullName>
    </alternativeName>
</protein>
<sequence>MANDYLFTSESVSEGHPDKVADQISDAILDAILAQDKYSRVAAETLCNTGLVVLAGEITTTANIDYIQIARDTIKRIGYDNTDYGIDYRGCAVLVAYDKQSPDIAQGVDRAHDNNLDQGAGDQGLMFGYACDETPELMPLPIHLSHRLVERQANLRRDGRLPWLRPDAKSQVTVRYVDGKPHSIDTVVLSTQHAPEIDLPALREAVIEEVIKPTLPADLIKGDIKFLVNPTGRFVIGGPQGDCGLTGRKIIVDTYGGAAPHGGGAFSGKDPSKVDRSAAYAGRYVAKNIVAAGLASRALIQVSYAIGVAEPTSVMVNTFGTGRVSDETITKLVREHFDLRPKGIIQMLDLLRPIYEKTAAYGHFGREEPEFSWEAADKALALAEAAGVEPAVQVA</sequence>